<sequence length="964" mass="109704">MTVVLFATEYDTPNIVVNMLSETPTEHHLFPLMIKYKPSNRIEFVLQTQRCPDSTRVRPVFICDARRLSLSEYVSTNTPLPARVICAGIDADATRELYEHLFDRKKDETGHDEENGSAARHLFSNLTSTLKCLVHYNRSAILRYLNNTFLSPTFPSWFLSTYGTHEGTLILTMSYYLFERTYSTIQTTRDYTKCFTADPGRNLFTYINMRDFMATMNGSRFRKQTVLFAVFAKARNARDRCELEYVDAKINAFREESRLAADSCVYYVYLAYRTALCREKFLQYCEHTAYDKNLPDDQQCAAEENYLGRSLDAELISIMNTYFSVEGYFGSYIHVDRAKLSPPHSYRGYDWNTEADTMVGYSSTATNLAISLRKLNSTCESLFSPLPPTLMGLLKLCASDRYVPRAEKSRKRTSGGREKEDETRVCRRNYLLNDTSRPIGPMPVFRVEMPEKRHVFCAVSAENWTRRLLPKDLMKNLPSEYVSDECLTDAVWLREDIAALCEVGEQLYRTRHEMFNENLPVFNFVGDVDLKLREDLQGLSRQEVFDLCRALRRTLIGAWRHLFPEVDPDSHPVFFFKSACPQNAAGAADEAMLYGGGGYDEDDDPRPEHAAAMVDYGDAVRRPPFCVCRRKLGLRVIIPFPPRTAAIGAQTLKRLAGILDHTLCLDRDLVCKLNAISHPGECFDTGIYSHGRSIRMPLMYKLDEASGLILHSRLNPIFIVPAGYRDRPAEFVLQQLCPQNLTHHGRPPQRDGSADQLTEVVLHITDRACADSDGNFLQSRARRAMSSGRLPLGPLLRAHLSLESGQSAPSLPTLVGRGGGGEGGASSDYEEERAVGSDEEEDDDDVENLQAFARRIAWPALLRHTRNHYREEVQQQLEAATVFTAVGRTCVAVKRGLYGRARDFSCLARETYTRQETVQVFLDIRGDQRRNVWATLWSRCFTRRCNSNAKQTHLSLKISLPSQY</sequence>
<accession>Q69153</accession>
<gene>
    <name type="primary">UL70</name>
</gene>
<proteinExistence type="inferred from homology"/>
<evidence type="ECO:0000255" key="1">
    <source>
        <dbReference type="HAMAP-Rule" id="MF_04011"/>
    </source>
</evidence>
<evidence type="ECO:0000256" key="2">
    <source>
        <dbReference type="SAM" id="MobiDB-lite"/>
    </source>
</evidence>
<dbReference type="EC" id="2.7.7.-" evidence="1"/>
<dbReference type="EMBL" id="L07319">
    <property type="protein sequence ID" value="AAA96665.1"/>
    <property type="molecule type" value="Genomic_DNA"/>
</dbReference>
<dbReference type="EMBL" id="U68299">
    <property type="status" value="NOT_ANNOTATED_CDS"/>
    <property type="molecule type" value="Genomic_DNA"/>
</dbReference>
<dbReference type="Proteomes" id="UP000008774">
    <property type="component" value="Segment"/>
</dbReference>
<dbReference type="GO" id="GO:0042025">
    <property type="term" value="C:host cell nucleus"/>
    <property type="evidence" value="ECO:0007669"/>
    <property type="project" value="UniProtKB-SubCell"/>
</dbReference>
<dbReference type="GO" id="GO:0003899">
    <property type="term" value="F:DNA-directed RNA polymerase activity"/>
    <property type="evidence" value="ECO:0007669"/>
    <property type="project" value="InterPro"/>
</dbReference>
<dbReference type="GO" id="GO:0008270">
    <property type="term" value="F:zinc ion binding"/>
    <property type="evidence" value="ECO:0007669"/>
    <property type="project" value="UniProtKB-KW"/>
</dbReference>
<dbReference type="GO" id="GO:0039686">
    <property type="term" value="P:bidirectional double-stranded viral DNA replication"/>
    <property type="evidence" value="ECO:0007669"/>
    <property type="project" value="InterPro"/>
</dbReference>
<dbReference type="GO" id="GO:0006260">
    <property type="term" value="P:DNA replication"/>
    <property type="evidence" value="ECO:0007669"/>
    <property type="project" value="UniProtKB-KW"/>
</dbReference>
<dbReference type="HAMAP" id="MF_04011">
    <property type="entry name" value="HSV_PRIM"/>
    <property type="match status" value="1"/>
</dbReference>
<dbReference type="InterPro" id="IPR033685">
    <property type="entry name" value="HSV_PRIM"/>
</dbReference>
<dbReference type="Pfam" id="PF03121">
    <property type="entry name" value="Herpes_UL52"/>
    <property type="match status" value="1"/>
</dbReference>
<organismHost>
    <name type="scientific">Mus musculus</name>
    <name type="common">Mouse</name>
    <dbReference type="NCBI Taxonomy" id="10090"/>
</organismHost>
<name>PRIM_MUHVS</name>
<comment type="function">
    <text evidence="1">Essential component of the helicase/primase complex. Unwinds the DNA at the replication forks and generates single-stranded DNA for both leading and lagging strand synthesis. The primase initiates primer synthesis and thereby produces large amount of short RNA primers on the lagging strand that the polymerase elongates using dNTPs.</text>
</comment>
<comment type="subunit">
    <text evidence="1">Associates with the helicase and the primase-associated factor to form the helicase-primase factor.</text>
</comment>
<comment type="subcellular location">
    <subcellularLocation>
        <location evidence="1">Host nucleus</location>
    </subcellularLocation>
    <text evidence="1">Requires the presence of the primase associated factor to properly localize in the host cell nucleus.</text>
</comment>
<comment type="similarity">
    <text evidence="1">Belongs to the herpesviridae DNA primase family.</text>
</comment>
<feature type="chain" id="PRO_0000116116" description="DNA primase">
    <location>
        <begin position="1"/>
        <end position="964"/>
    </location>
</feature>
<feature type="region of interest" description="Disordered" evidence="2">
    <location>
        <begin position="807"/>
        <end position="844"/>
    </location>
</feature>
<feature type="site" description="Essential for primase activity" evidence="1">
    <location>
        <position position="527"/>
    </location>
</feature>
<feature type="site" description="Essential for primase activity" evidence="1">
    <location>
        <position position="529"/>
    </location>
</feature>
<reference key="1">
    <citation type="journal article" date="1995" name="Virus Genes">
        <title>Characterization of a conserved gene block in the murine cytomegalovirus genome.</title>
        <authorList>
            <person name="Messerle M."/>
            <person name="Rapp M."/>
            <person name="Lucin P."/>
            <person name="Koszinowski U.H."/>
        </authorList>
    </citation>
    <scope>NUCLEOTIDE SEQUENCE [GENOMIC DNA]</scope>
</reference>
<reference key="2">
    <citation type="journal article" date="1996" name="J. Virol.">
        <title>Analysis of the complete DNA sequence of murine cytomegalovirus.</title>
        <authorList>
            <person name="Rawlinson W.D."/>
            <person name="Farrell H.E."/>
            <person name="Barrell B.G."/>
        </authorList>
    </citation>
    <scope>NUCLEOTIDE SEQUENCE [LARGE SCALE GENOMIC DNA]</scope>
</reference>
<protein>
    <recommendedName>
        <fullName evidence="1">DNA primase</fullName>
        <ecNumber evidence="1">2.7.7.-</ecNumber>
    </recommendedName>
</protein>
<organism>
    <name type="scientific">Murid herpesvirus 1 (strain Smith)</name>
    <name type="common">MuHV-1</name>
    <name type="synonym">Mouse cytomegalovirus</name>
    <dbReference type="NCBI Taxonomy" id="10367"/>
    <lineage>
        <taxon>Viruses</taxon>
        <taxon>Duplodnaviria</taxon>
        <taxon>Heunggongvirae</taxon>
        <taxon>Peploviricota</taxon>
        <taxon>Herviviricetes</taxon>
        <taxon>Herpesvirales</taxon>
        <taxon>Orthoherpesviridae</taxon>
        <taxon>Betaherpesvirinae</taxon>
        <taxon>Muromegalovirus</taxon>
        <taxon>Muromegalovirus muridbeta1</taxon>
        <taxon>Murid herpesvirus 1</taxon>
    </lineage>
</organism>
<keyword id="KW-0235">DNA replication</keyword>
<keyword id="KW-1048">Host nucleus</keyword>
<keyword id="KW-0479">Metal-binding</keyword>
<keyword id="KW-1185">Reference proteome</keyword>
<keyword id="KW-0808">Transferase</keyword>
<keyword id="KW-0862">Zinc</keyword>
<keyword id="KW-0863">Zinc-finger</keyword>